<keyword id="KW-0028">Amino-acid biosynthesis</keyword>
<keyword id="KW-0057">Aromatic amino acid biosynthesis</keyword>
<keyword id="KW-0963">Cytoplasm</keyword>
<keyword id="KW-0808">Transferase</keyword>
<reference key="1">
    <citation type="journal article" date="2006" name="J. Bacteriol.">
        <title>Complete genome sequence of Yersinia pestis strains Antiqua and Nepal516: evidence of gene reduction in an emerging pathogen.</title>
        <authorList>
            <person name="Chain P.S.G."/>
            <person name="Hu P."/>
            <person name="Malfatti S.A."/>
            <person name="Radnedge L."/>
            <person name="Larimer F."/>
            <person name="Vergez L.M."/>
            <person name="Worsham P."/>
            <person name="Chu M.C."/>
            <person name="Andersen G.L."/>
        </authorList>
    </citation>
    <scope>NUCLEOTIDE SEQUENCE [LARGE SCALE GENOMIC DNA]</scope>
    <source>
        <strain>Antiqua</strain>
    </source>
</reference>
<proteinExistence type="inferred from homology"/>
<comment type="function">
    <text evidence="1">Catalyzes the transfer of the enolpyruvyl moiety of phosphoenolpyruvate (PEP) to the 5-hydroxyl of shikimate-3-phosphate (S3P) to produce enolpyruvyl shikimate-3-phosphate and inorganic phosphate.</text>
</comment>
<comment type="catalytic activity">
    <reaction evidence="1">
        <text>3-phosphoshikimate + phosphoenolpyruvate = 5-O-(1-carboxyvinyl)-3-phosphoshikimate + phosphate</text>
        <dbReference type="Rhea" id="RHEA:21256"/>
        <dbReference type="ChEBI" id="CHEBI:43474"/>
        <dbReference type="ChEBI" id="CHEBI:57701"/>
        <dbReference type="ChEBI" id="CHEBI:58702"/>
        <dbReference type="ChEBI" id="CHEBI:145989"/>
        <dbReference type="EC" id="2.5.1.19"/>
    </reaction>
    <physiologicalReaction direction="left-to-right" evidence="1">
        <dbReference type="Rhea" id="RHEA:21257"/>
    </physiologicalReaction>
</comment>
<comment type="pathway">
    <text evidence="1">Metabolic intermediate biosynthesis; chorismate biosynthesis; chorismate from D-erythrose 4-phosphate and phosphoenolpyruvate: step 6/7.</text>
</comment>
<comment type="subunit">
    <text evidence="1">Monomer.</text>
</comment>
<comment type="subcellular location">
    <subcellularLocation>
        <location evidence="1">Cytoplasm</location>
    </subcellularLocation>
</comment>
<comment type="similarity">
    <text evidence="1">Belongs to the EPSP synthase family.</text>
</comment>
<protein>
    <recommendedName>
        <fullName evidence="1">3-phosphoshikimate 1-carboxyvinyltransferase</fullName>
        <ecNumber evidence="1">2.5.1.19</ecNumber>
    </recommendedName>
    <alternativeName>
        <fullName evidence="1">5-enolpyruvylshikimate-3-phosphate synthase</fullName>
        <shortName evidence="1">EPSP synthase</shortName>
        <shortName evidence="1">EPSPS</shortName>
    </alternativeName>
</protein>
<evidence type="ECO:0000255" key="1">
    <source>
        <dbReference type="HAMAP-Rule" id="MF_00210"/>
    </source>
</evidence>
<accession>Q1CA73</accession>
<gene>
    <name evidence="1" type="primary">aroA</name>
    <name type="ordered locus">YPA_0681</name>
</gene>
<name>AROA_YERPA</name>
<feature type="chain" id="PRO_1000012511" description="3-phosphoshikimate 1-carboxyvinyltransferase">
    <location>
        <begin position="1"/>
        <end position="428"/>
    </location>
</feature>
<feature type="active site" description="Proton acceptor" evidence="1">
    <location>
        <position position="314"/>
    </location>
</feature>
<feature type="binding site" evidence="1">
    <location>
        <position position="23"/>
    </location>
    <ligand>
        <name>3-phosphoshikimate</name>
        <dbReference type="ChEBI" id="CHEBI:145989"/>
    </ligand>
</feature>
<feature type="binding site" evidence="1">
    <location>
        <position position="23"/>
    </location>
    <ligand>
        <name>phosphoenolpyruvate</name>
        <dbReference type="ChEBI" id="CHEBI:58702"/>
    </ligand>
</feature>
<feature type="binding site" evidence="1">
    <location>
        <position position="24"/>
    </location>
    <ligand>
        <name>3-phosphoshikimate</name>
        <dbReference type="ChEBI" id="CHEBI:145989"/>
    </ligand>
</feature>
<feature type="binding site" evidence="1">
    <location>
        <position position="28"/>
    </location>
    <ligand>
        <name>3-phosphoshikimate</name>
        <dbReference type="ChEBI" id="CHEBI:145989"/>
    </ligand>
</feature>
<feature type="binding site" evidence="1">
    <location>
        <position position="97"/>
    </location>
    <ligand>
        <name>phosphoenolpyruvate</name>
        <dbReference type="ChEBI" id="CHEBI:58702"/>
    </ligand>
</feature>
<feature type="binding site" evidence="1">
    <location>
        <position position="125"/>
    </location>
    <ligand>
        <name>phosphoenolpyruvate</name>
        <dbReference type="ChEBI" id="CHEBI:58702"/>
    </ligand>
</feature>
<feature type="binding site" evidence="1">
    <location>
        <position position="170"/>
    </location>
    <ligand>
        <name>3-phosphoshikimate</name>
        <dbReference type="ChEBI" id="CHEBI:145989"/>
    </ligand>
</feature>
<feature type="binding site" evidence="1">
    <location>
        <position position="171"/>
    </location>
    <ligand>
        <name>3-phosphoshikimate</name>
        <dbReference type="ChEBI" id="CHEBI:145989"/>
    </ligand>
</feature>
<feature type="binding site" evidence="1">
    <location>
        <position position="172"/>
    </location>
    <ligand>
        <name>3-phosphoshikimate</name>
        <dbReference type="ChEBI" id="CHEBI:145989"/>
    </ligand>
</feature>
<feature type="binding site" evidence="1">
    <location>
        <position position="172"/>
    </location>
    <ligand>
        <name>phosphoenolpyruvate</name>
        <dbReference type="ChEBI" id="CHEBI:58702"/>
    </ligand>
</feature>
<feature type="binding site" evidence="1">
    <location>
        <position position="198"/>
    </location>
    <ligand>
        <name>3-phosphoshikimate</name>
        <dbReference type="ChEBI" id="CHEBI:145989"/>
    </ligand>
</feature>
<feature type="binding site" evidence="1">
    <location>
        <position position="314"/>
    </location>
    <ligand>
        <name>3-phosphoshikimate</name>
        <dbReference type="ChEBI" id="CHEBI:145989"/>
    </ligand>
</feature>
<feature type="binding site" evidence="1">
    <location>
        <position position="337"/>
    </location>
    <ligand>
        <name>3-phosphoshikimate</name>
        <dbReference type="ChEBI" id="CHEBI:145989"/>
    </ligand>
</feature>
<feature type="binding site" evidence="1">
    <location>
        <position position="341"/>
    </location>
    <ligand>
        <name>3-phosphoshikimate</name>
        <dbReference type="ChEBI" id="CHEBI:145989"/>
    </ligand>
</feature>
<feature type="binding site" evidence="1">
    <location>
        <position position="345"/>
    </location>
    <ligand>
        <name>phosphoenolpyruvate</name>
        <dbReference type="ChEBI" id="CHEBI:58702"/>
    </ligand>
</feature>
<feature type="binding site" evidence="1">
    <location>
        <position position="387"/>
    </location>
    <ligand>
        <name>phosphoenolpyruvate</name>
        <dbReference type="ChEBI" id="CHEBI:58702"/>
    </ligand>
</feature>
<feature type="binding site" evidence="1">
    <location>
        <position position="412"/>
    </location>
    <ligand>
        <name>phosphoenolpyruvate</name>
        <dbReference type="ChEBI" id="CHEBI:58702"/>
    </ligand>
</feature>
<dbReference type="EC" id="2.5.1.19" evidence="1"/>
<dbReference type="EMBL" id="CP000308">
    <property type="protein sequence ID" value="ABG12649.1"/>
    <property type="molecule type" value="Genomic_DNA"/>
</dbReference>
<dbReference type="RefSeq" id="WP_002211325.1">
    <property type="nucleotide sequence ID" value="NZ_CP009906.1"/>
</dbReference>
<dbReference type="SMR" id="Q1CA73"/>
<dbReference type="GeneID" id="57977186"/>
<dbReference type="KEGG" id="ypa:YPA_0681"/>
<dbReference type="UniPathway" id="UPA00053">
    <property type="reaction ID" value="UER00089"/>
</dbReference>
<dbReference type="Proteomes" id="UP000001971">
    <property type="component" value="Chromosome"/>
</dbReference>
<dbReference type="GO" id="GO:0005737">
    <property type="term" value="C:cytoplasm"/>
    <property type="evidence" value="ECO:0007669"/>
    <property type="project" value="UniProtKB-SubCell"/>
</dbReference>
<dbReference type="GO" id="GO:0003866">
    <property type="term" value="F:3-phosphoshikimate 1-carboxyvinyltransferase activity"/>
    <property type="evidence" value="ECO:0007669"/>
    <property type="project" value="UniProtKB-UniRule"/>
</dbReference>
<dbReference type="GO" id="GO:0008652">
    <property type="term" value="P:amino acid biosynthetic process"/>
    <property type="evidence" value="ECO:0007669"/>
    <property type="project" value="UniProtKB-KW"/>
</dbReference>
<dbReference type="GO" id="GO:0009073">
    <property type="term" value="P:aromatic amino acid family biosynthetic process"/>
    <property type="evidence" value="ECO:0007669"/>
    <property type="project" value="UniProtKB-KW"/>
</dbReference>
<dbReference type="GO" id="GO:0009423">
    <property type="term" value="P:chorismate biosynthetic process"/>
    <property type="evidence" value="ECO:0007669"/>
    <property type="project" value="UniProtKB-UniRule"/>
</dbReference>
<dbReference type="CDD" id="cd01556">
    <property type="entry name" value="EPSP_synthase"/>
    <property type="match status" value="1"/>
</dbReference>
<dbReference type="FunFam" id="3.65.10.10:FF:000003">
    <property type="entry name" value="3-phosphoshikimate 1-carboxyvinyltransferase"/>
    <property type="match status" value="1"/>
</dbReference>
<dbReference type="FunFam" id="3.65.10.10:FF:000004">
    <property type="entry name" value="3-phosphoshikimate 1-carboxyvinyltransferase"/>
    <property type="match status" value="1"/>
</dbReference>
<dbReference type="Gene3D" id="3.65.10.10">
    <property type="entry name" value="Enolpyruvate transferase domain"/>
    <property type="match status" value="2"/>
</dbReference>
<dbReference type="HAMAP" id="MF_00210">
    <property type="entry name" value="EPSP_synth"/>
    <property type="match status" value="1"/>
</dbReference>
<dbReference type="InterPro" id="IPR001986">
    <property type="entry name" value="Enolpyruvate_Tfrase_dom"/>
</dbReference>
<dbReference type="InterPro" id="IPR036968">
    <property type="entry name" value="Enolpyruvate_Tfrase_sf"/>
</dbReference>
<dbReference type="InterPro" id="IPR006264">
    <property type="entry name" value="EPSP_synthase"/>
</dbReference>
<dbReference type="InterPro" id="IPR023193">
    <property type="entry name" value="EPSP_synthase_CS"/>
</dbReference>
<dbReference type="InterPro" id="IPR013792">
    <property type="entry name" value="RNA3'P_cycl/enolpyr_Trfase_a/b"/>
</dbReference>
<dbReference type="NCBIfam" id="TIGR01356">
    <property type="entry name" value="aroA"/>
    <property type="match status" value="1"/>
</dbReference>
<dbReference type="PANTHER" id="PTHR21090">
    <property type="entry name" value="AROM/DEHYDROQUINATE SYNTHASE"/>
    <property type="match status" value="1"/>
</dbReference>
<dbReference type="PANTHER" id="PTHR21090:SF5">
    <property type="entry name" value="PENTAFUNCTIONAL AROM POLYPEPTIDE"/>
    <property type="match status" value="1"/>
</dbReference>
<dbReference type="Pfam" id="PF00275">
    <property type="entry name" value="EPSP_synthase"/>
    <property type="match status" value="1"/>
</dbReference>
<dbReference type="PIRSF" id="PIRSF000505">
    <property type="entry name" value="EPSPS"/>
    <property type="match status" value="1"/>
</dbReference>
<dbReference type="SUPFAM" id="SSF55205">
    <property type="entry name" value="EPT/RTPC-like"/>
    <property type="match status" value="1"/>
</dbReference>
<dbReference type="PROSITE" id="PS00104">
    <property type="entry name" value="EPSP_SYNTHASE_1"/>
    <property type="match status" value="1"/>
</dbReference>
<dbReference type="PROSITE" id="PS00885">
    <property type="entry name" value="EPSP_SYNTHASE_2"/>
    <property type="match status" value="1"/>
</dbReference>
<organism>
    <name type="scientific">Yersinia pestis bv. Antiqua (strain Antiqua)</name>
    <dbReference type="NCBI Taxonomy" id="360102"/>
    <lineage>
        <taxon>Bacteria</taxon>
        <taxon>Pseudomonadati</taxon>
        <taxon>Pseudomonadota</taxon>
        <taxon>Gammaproteobacteria</taxon>
        <taxon>Enterobacterales</taxon>
        <taxon>Yersiniaceae</taxon>
        <taxon>Yersinia</taxon>
    </lineage>
</organism>
<sequence>MLESLTLQPIALVNGTVNLPGSKSVSNRALLLAALAEGTTQLNNVLDSDDIRHMLNALQALGVDFRLSADRTCCEVDGLGGKLVAEQPLSLFLGNAGTAMRPLAAVLCLGNSDIVLTGEPRMKERPIGHLVDALRQGGAQIDYLEQENYPPLRLRGGFRGGELTVDGRVSSQFLTALLMTAPLAEQDTTIRIMGDLVSKPYIDITLHLMKAFGIDVGHENYQIFHIKGGQTYRSPGTYLVEGDASSASYFLAAAAIKGGTVRVTGIGKKSVQGDTKFADVLEKMGAKVTWGDDYIECSRGELQGIDMDMNHIPDAAMTIATTALFATGPTTIRNIYNWRVKETDRLTAMATELRKVGAEVEEGEDYIRVVPPLQLTAADIGTYDDHRMAMCFSLVALSDTPVTILDPKCTAKTFPDYFEQFARLSQLA</sequence>